<comment type="function">
    <text evidence="3 5 6 8 10">3'-5' exoribonuclease that releases 5'-nucleoside monophosphates and is involved in maturation of structured RNAs (rRNAs, tRNAs and SsrA/tmRNA). In stationary phase, involved in the post-transcriptional regulation of ompA mRNA stability. Shortens RNA processively to di- and trinucleotides. In vitro, exhibits helicase activity, which is independent of its RNase activity. RNases 2 and R (rnb and this entry) contribute to rRNA degradation during starvation, while RNase R and PNPase (this entry and pnp) are the major contributors to quality control of rRNA during steady state growth (PubMed:21135037). Required for the expression of virulence genes in enteroinvasive strains of E.coli.</text>
</comment>
<comment type="catalytic activity">
    <reaction evidence="3">
        <text>Exonucleolytic cleavage in the 3'- to 5'-direction to yield nucleoside 5'-phosphates.</text>
        <dbReference type="EC" id="3.1.13.1"/>
    </reaction>
</comment>
<comment type="cofactor">
    <cofactor evidence="3">
        <name>Mg(2+)</name>
        <dbReference type="ChEBI" id="CHEBI:18420"/>
    </cofactor>
</comment>
<comment type="activity regulation">
    <text evidence="3 9 11">Stimulated by the presence of a monovalent cation (PubMed:11948193). Highly unstable in exponential growth phase. This instability is due to the binding of SsrA/tmRNA and its associated protein SmpB to the C-terminal region of RNase R (PubMed:20688916). In contrast, RNase R becomes stabilized upon entry into stationary phase. The difference in stability between exponential and stationary phase is due to the acetylation of a single lysine residue (PubMed:21981926).</text>
</comment>
<comment type="biophysicochemical properties">
    <kinetics>
        <Vmax evidence="3">26900.0 nmol/min/mg enzyme with Poly(A) as substrate</Vmax>
        <Vmax evidence="3">4840.0 nmol/min/mg enzyme with 23S rRNA as substrate</Vmax>
        <Vmax evidence="3">2750.0 nmol/min/mg enzyme with 16S rRNA as substrate</Vmax>
        <Vmax evidence="3">290.0 nmol/min/mg enzyme with 5S rRNA as substrate</Vmax>
        <Vmax evidence="3">350.0 nmol/min/mg enzyme with tRNA as substrate</Vmax>
    </kinetics>
    <phDependence>
        <text evidence="3">Optimum pH is 7.5-9.5.</text>
    </phDependence>
    <temperatureDependence>
        <text evidence="3">Optimum temperature is 50 degrees Celsius.</text>
    </temperatureDependence>
</comment>
<comment type="subunit">
    <text evidence="3">Monomer.</text>
</comment>
<comment type="subcellular location">
    <subcellularLocation>
        <location evidence="13">Cytoplasm</location>
    </subcellularLocation>
</comment>
<comment type="induction">
    <text evidence="4 5 6">Induced seven- to eightfold by cold shock. Induction is mainly a result of the stabilization of the rnr transcripts. Also induced at stationary phase.</text>
</comment>
<comment type="PTM">
    <text evidence="7 11 12">Acetylated at Lys-544 by PatZ during exponential growth phase. Acetylation alters RNase R structure and enhances binding of SsrA/tmRNA and SmpB, leading to instability and degradation of RNase R. Not acetylated and stable in stationary phase cells.</text>
</comment>
<comment type="similarity">
    <text evidence="13">Belongs to the RNR ribonuclease family. RNase R subfamily.</text>
</comment>
<comment type="sequence caution" evidence="13">
    <conflict type="erroneous initiation">
        <sequence resource="EMBL-CDS" id="AAA97075"/>
    </conflict>
    <text>Extended N-terminus.</text>
</comment>
<name>RNR_ECOLI</name>
<accession>P21499</accession>
<accession>P76800</accession>
<accession>Q2M6C6</accession>
<protein>
    <recommendedName>
        <fullName>Ribonuclease R</fullName>
        <shortName>RNase R</shortName>
        <ecNumber>3.1.13.1</ecNumber>
    </recommendedName>
    <alternativeName>
        <fullName>Protein VacB</fullName>
    </alternativeName>
</protein>
<reference key="1">
    <citation type="journal article" date="1995" name="Nucleic Acids Res.">
        <title>Analysis of the Escherichia coli genome VI: DNA sequence of the region from 92.8 through 100 minutes.</title>
        <authorList>
            <person name="Burland V.D."/>
            <person name="Plunkett G. III"/>
            <person name="Sofia H.J."/>
            <person name="Daniels D.L."/>
            <person name="Blattner F.R."/>
        </authorList>
    </citation>
    <scope>NUCLEOTIDE SEQUENCE [LARGE SCALE GENOMIC DNA]</scope>
    <source>
        <strain>K12 / MG1655 / ATCC 47076</strain>
    </source>
</reference>
<reference key="2">
    <citation type="journal article" date="1997" name="Science">
        <title>The complete genome sequence of Escherichia coli K-12.</title>
        <authorList>
            <person name="Blattner F.R."/>
            <person name="Plunkett G. III"/>
            <person name="Bloch C.A."/>
            <person name="Perna N.T."/>
            <person name="Burland V."/>
            <person name="Riley M."/>
            <person name="Collado-Vides J."/>
            <person name="Glasner J.D."/>
            <person name="Rode C.K."/>
            <person name="Mayhew G.F."/>
            <person name="Gregor J."/>
            <person name="Davis N.W."/>
            <person name="Kirkpatrick H.A."/>
            <person name="Goeden M.A."/>
            <person name="Rose D.J."/>
            <person name="Mau B."/>
            <person name="Shao Y."/>
        </authorList>
    </citation>
    <scope>NUCLEOTIDE SEQUENCE [LARGE SCALE GENOMIC DNA]</scope>
    <source>
        <strain>K12 / MG1655 / ATCC 47076</strain>
    </source>
</reference>
<reference key="3">
    <citation type="journal article" date="2006" name="Mol. Syst. Biol.">
        <title>Highly accurate genome sequences of Escherichia coli K-12 strains MG1655 and W3110.</title>
        <authorList>
            <person name="Hayashi K."/>
            <person name="Morooka N."/>
            <person name="Yamamoto Y."/>
            <person name="Fujita K."/>
            <person name="Isono K."/>
            <person name="Choi S."/>
            <person name="Ohtsubo E."/>
            <person name="Baba T."/>
            <person name="Wanner B.L."/>
            <person name="Mori H."/>
            <person name="Horiuchi T."/>
        </authorList>
    </citation>
    <scope>NUCLEOTIDE SEQUENCE [LARGE SCALE GENOMIC DNA]</scope>
    <source>
        <strain>K12 / W3110 / ATCC 27325 / DSM 5911</strain>
    </source>
</reference>
<reference key="4">
    <citation type="journal article" date="1988" name="J. Biol. Chem.">
        <title>Nucleotide sequence and analysis of the purA gene encoding adenylosuccinate synthetase of Escherichia coli K12.</title>
        <authorList>
            <person name="Wolfe S.A."/>
            <person name="Smith J.M."/>
        </authorList>
    </citation>
    <scope>NUCLEOTIDE SEQUENCE [GENOMIC DNA] OF 1-86</scope>
    <source>
        <strain>K12</strain>
    </source>
</reference>
<reference key="5">
    <citation type="journal article" date="2002" name="J. Biol. Chem.">
        <title>Purification and characterization of the Escherichia coli exoribonuclease RNase R. Comparison with RNase II.</title>
        <authorList>
            <person name="Cheng Z.F."/>
            <person name="Deutscher M.P."/>
        </authorList>
    </citation>
    <scope>PROTEIN SEQUENCE OF 2-8</scope>
    <scope>FUNCTION</scope>
    <scope>CATALYTIC ACTIVITY</scope>
    <scope>COFACTOR</scope>
    <scope>ACTIVITY REGULATION</scope>
    <scope>BIOPHYSICOCHEMICAL PROPERTIES</scope>
    <scope>SUBUNIT</scope>
</reference>
<reference key="6">
    <citation type="journal article" date="1992" name="J. Bacteriol.">
        <title>vacB, a novel chromosomal gene required for expression of virulence genes on the large plasmid of Shigella flexneri.</title>
        <authorList>
            <person name="Tobe T."/>
            <person name="Sasakawa C."/>
            <person name="Okada N."/>
            <person name="Honma Y."/>
            <person name="Yoshikawa M."/>
        </authorList>
    </citation>
    <scope>IDENTIFICATION</scope>
</reference>
<reference key="7">
    <citation type="journal article" date="1998" name="J. Biol. Chem.">
        <title>The vacB gene required for virulence in Shigella flexneri and Escherichia coli encodes the exoribonuclease RNase R.</title>
        <authorList>
            <person name="Cheng Z.-F."/>
            <person name="Zuo Y."/>
            <person name="Li Z."/>
            <person name="Rudd K.E."/>
            <person name="Deutscher M.P."/>
        </authorList>
    </citation>
    <scope>CHARACTERIZATION</scope>
</reference>
<reference key="8">
    <citation type="journal article" date="2003" name="Mol. Microbiol.">
        <title>Cold shock induction of RNase R and its role in the maturation of the quality control mediator SsrA/tmRNA.</title>
        <authorList>
            <person name="Cairrao F."/>
            <person name="Cruz A."/>
            <person name="Mori H."/>
            <person name="Arraiano C.M."/>
        </authorList>
    </citation>
    <scope>FUNCTION IN MATURATION OF SSRA/TMRNA</scope>
    <scope>INDUCTION</scope>
    <source>
        <strain>K12 / MG1693</strain>
    </source>
</reference>
<reference key="9">
    <citation type="journal article" date="2003" name="Res. Microbiol.">
        <title>Changes in Escherichia coli transcriptome during acclimatization at low temperature.</title>
        <authorList>
            <person name="Polissi A."/>
            <person name="De Laurentis W."/>
            <person name="Zangrossi S."/>
            <person name="Briani F."/>
            <person name="Longhi V."/>
            <person name="Pesole G."/>
            <person name="Deho G."/>
        </authorList>
    </citation>
    <scope>INDUCTION BY COLD SHOCK</scope>
    <source>
        <strain>K12 / MG1655 / ATCC 47076</strain>
    </source>
</reference>
<reference key="10">
    <citation type="journal article" date="2006" name="Mol. Microbiol.">
        <title>RNase R affects gene expression in stationary phase: regulation of ompA.</title>
        <authorList>
            <person name="Andrade J.M."/>
            <person name="Cairrao F."/>
            <person name="Arraiano C.M."/>
        </authorList>
    </citation>
    <scope>FUNCTION IN REGULATION OF OMPA</scope>
    <scope>INDUCTION</scope>
    <source>
        <strain>K12 / MG1693</strain>
    </source>
</reference>
<reference key="11">
    <citation type="journal article" date="2009" name="Mol. Cell. Proteomics">
        <title>Lysine acetylation is a highly abundant and evolutionarily conserved modification in Escherichia coli.</title>
        <authorList>
            <person name="Zhang J."/>
            <person name="Sprung R."/>
            <person name="Pei J."/>
            <person name="Tan X."/>
            <person name="Kim S."/>
            <person name="Zhu H."/>
            <person name="Liu C.F."/>
            <person name="Grishin N.V."/>
            <person name="Zhao Y."/>
        </authorList>
    </citation>
    <scope>ACETYLATION [LARGE SCALE ANALYSIS] AT LYS-544</scope>
    <scope>IDENTIFICATION BY MASS SPECTROMETRY</scope>
    <source>
        <strain>K12 / JW1106</strain>
        <strain>K12 / MG1655 / ATCC 47076</strain>
    </source>
</reference>
<reference key="12">
    <citation type="journal article" date="2010" name="J. Bacteriol.">
        <title>Escherichia coli RNase R has dual activities, helicase and RNase.</title>
        <authorList>
            <person name="Awano N."/>
            <person name="Rajagopal V."/>
            <person name="Arbing M."/>
            <person name="Patel S."/>
            <person name="Hunt J."/>
            <person name="Inouye M."/>
            <person name="Phadtare S."/>
        </authorList>
    </citation>
    <scope>FUNCTION AS HELICASE</scope>
    <scope>MUTAGENESIS OF ASP-272 AND ASP-280</scope>
    <source>
        <strain>K12 / ATCC 35607 / JM83</strain>
    </source>
</reference>
<reference key="13">
    <citation type="journal article" date="2010" name="J. Biol. Chem.">
        <title>A novel mechanism for ribonuclease regulation: transfer-messenger RNA (tmRNA) and its associated protein SmpB regulate the stability of RNase R.</title>
        <authorList>
            <person name="Liang W."/>
            <person name="Deutscher M.P."/>
        </authorList>
    </citation>
    <scope>ACTIVITY REGULATION</scope>
    <source>
        <strain>K12 / MG1655 / ATCC 47076</strain>
    </source>
</reference>
<reference key="14">
    <citation type="journal article" date="2011" name="Mol. Cell">
        <title>Acetylation regulates the stability of a bacterial protein: growth stage-dependent modification of RNase R.</title>
        <authorList>
            <person name="Liang W."/>
            <person name="Malhotra A."/>
            <person name="Deutscher M.P."/>
        </authorList>
    </citation>
    <scope>ACTIVITY REGULATION</scope>
    <scope>ACETYLATION AT LYS-544</scope>
    <scope>MUTAGENESIS OF LYS-544; GLU-764 AND ASP-766</scope>
    <source>
        <strain>K12 / MG1655 / ATCC 47076</strain>
    </source>
</reference>
<reference key="15">
    <citation type="journal article" date="2011" name="RNA">
        <title>Degradation of ribosomal RNA during starvation: comparison to quality control during steady-state growth and a role for RNase PH.</title>
        <authorList>
            <person name="Basturea G.N."/>
            <person name="Zundel M.A."/>
            <person name="Deutscher M.P."/>
        </authorList>
    </citation>
    <scope>FUNCTION IN RIBOSOME DEGRADATION DURING STARVATION</scope>
    <source>
        <strain>K12 / MG1655(Seq)*</strain>
    </source>
</reference>
<reference key="16">
    <citation type="journal article" date="2012" name="RNA">
        <title>Post-translational modification of RNase R is regulated by stress-dependent reduction in the acetylating enzyme Pka (YfiQ).</title>
        <authorList>
            <person name="Liang W."/>
            <person name="Deutscher M.P."/>
        </authorList>
    </citation>
    <scope>ACETYLATION</scope>
    <source>
        <strain>K12 / MG1655 / ATCC 47076</strain>
    </source>
</reference>
<proteinExistence type="evidence at protein level"/>
<keyword id="KW-0007">Acetylation</keyword>
<keyword id="KW-0963">Cytoplasm</keyword>
<keyword id="KW-0903">Direct protein sequencing</keyword>
<keyword id="KW-0269">Exonuclease</keyword>
<keyword id="KW-0378">Hydrolase</keyword>
<keyword id="KW-0540">Nuclease</keyword>
<keyword id="KW-1185">Reference proteome</keyword>
<keyword id="KW-0694">RNA-binding</keyword>
<keyword id="KW-0346">Stress response</keyword>
<keyword id="KW-0843">Virulence</keyword>
<gene>
    <name type="primary">rnr</name>
    <name type="synonym">vacB</name>
    <name type="synonym">yjeC</name>
    <name type="ordered locus">b4179</name>
    <name type="ordered locus">JW5741</name>
</gene>
<sequence length="813" mass="92109">MSQDPFQEREAEKYANPIPSREFILEHLTKREKPASRDELAVELHIEGEEQLEGLRRRLRAMERDGQLVFTRRQCYALPERLDLVKGTVIGHRDGYGFLRVEGRKDDLYLSSEQMKTCIHGDQVLAQPLGADRKGRREARIVRVLVPKTSQIVGRYFTEAGVGFVVPDDSRLSFDILIPPDQIMGARMGFVVVVELTQRPTRRTKAVGKIVEVLGDNMGTGMAVDIALRTHEIPYIWPQAVEQQVAGLKEEVPEEAKAGRVDLRDLPLVTIDGEDARDFDDAVYCEKKRGGGWRLWVAIADVSYYVRPSTPLDREARNRGTSVYFPSQVIPMLPEVLSNGLCSLNPQVDRLCMVCEMTVSSKGRLTGYKFYEAVMSSHARLTYTKVWHILQGDQDLREQYAPLVKHLEELHNLYKVLDKAREERGGISFESEEAKFIFNAERRIERIEQTQRNDAHKLIEECMILANISAARFVEKAKEPALFRIHDKPSTEAITSFRSVLAELGLELPGGNKPEPRDYAELLESVADRPDAEMLQTMLLRSMKQAIYDPENRGHFGLALQSYAHFTSPIRRYPDLTLHRAIKYLLAKEQGHQGNTTETGGYHYSMEEMLQLGQHCSMAERRADEATRDVADWLKCDFMLDQVGNVFKGVISSVTGFGFFVRLDDLFIDGLVHVSSLDNDYYRFDQVGQRLMGESSGQTYRLGDRVEVRVEAVNMDERKIDFSLISSERAPRNVGKTAREKAKKGDAGKKGGKRRQVGKKVNFEPDSAFRGEKKTKPKAAKKDARKAKKPSAKTQKIAAATKAKRAAKKKVAE</sequence>
<dbReference type="EC" id="3.1.13.1"/>
<dbReference type="EMBL" id="U14003">
    <property type="protein sequence ID" value="AAA97075.1"/>
    <property type="status" value="ALT_INIT"/>
    <property type="molecule type" value="Genomic_DNA"/>
</dbReference>
<dbReference type="EMBL" id="U00096">
    <property type="protein sequence ID" value="AAC77136.2"/>
    <property type="molecule type" value="Genomic_DNA"/>
</dbReference>
<dbReference type="EMBL" id="AP009048">
    <property type="protein sequence ID" value="BAE78180.1"/>
    <property type="molecule type" value="Genomic_DNA"/>
</dbReference>
<dbReference type="EMBL" id="J04199">
    <property type="status" value="NOT_ANNOTATED_CDS"/>
    <property type="molecule type" value="Genomic_DNA"/>
</dbReference>
<dbReference type="PIR" id="S56404">
    <property type="entry name" value="S56404"/>
</dbReference>
<dbReference type="RefSeq" id="NP_418600.4">
    <property type="nucleotide sequence ID" value="NC_000913.3"/>
</dbReference>
<dbReference type="RefSeq" id="WP_000076332.1">
    <property type="nucleotide sequence ID" value="NZ_LN832404.1"/>
</dbReference>
<dbReference type="SMR" id="P21499"/>
<dbReference type="BioGRID" id="4261892">
    <property type="interactions" value="76"/>
</dbReference>
<dbReference type="DIP" id="DIP-10733N"/>
<dbReference type="FunCoup" id="P21499">
    <property type="interactions" value="750"/>
</dbReference>
<dbReference type="IntAct" id="P21499">
    <property type="interactions" value="61"/>
</dbReference>
<dbReference type="STRING" id="511145.b4179"/>
<dbReference type="iPTMnet" id="P21499"/>
<dbReference type="jPOST" id="P21499"/>
<dbReference type="PaxDb" id="511145-b4179"/>
<dbReference type="EnsemblBacteria" id="AAC77136">
    <property type="protein sequence ID" value="AAC77136"/>
    <property type="gene ID" value="b4179"/>
</dbReference>
<dbReference type="GeneID" id="948692"/>
<dbReference type="KEGG" id="ecj:JW5741"/>
<dbReference type="KEGG" id="eco:b4179"/>
<dbReference type="KEGG" id="ecoc:C3026_22580"/>
<dbReference type="PATRIC" id="fig|1411691.4.peg.2522"/>
<dbReference type="EchoBASE" id="EB1239"/>
<dbReference type="eggNOG" id="COG0557">
    <property type="taxonomic scope" value="Bacteria"/>
</dbReference>
<dbReference type="HOGENOM" id="CLU_002333_7_0_6"/>
<dbReference type="InParanoid" id="P21499"/>
<dbReference type="OMA" id="DWYEYRS"/>
<dbReference type="OrthoDB" id="9764149at2"/>
<dbReference type="PhylomeDB" id="P21499"/>
<dbReference type="BioCyc" id="EcoCyc:EG11259-MONOMER"/>
<dbReference type="BioCyc" id="MetaCyc:EG11259-MONOMER"/>
<dbReference type="BRENDA" id="3.1.13.1">
    <property type="organism ID" value="2026"/>
</dbReference>
<dbReference type="PRO" id="PR:P21499"/>
<dbReference type="Proteomes" id="UP000000625">
    <property type="component" value="Chromosome"/>
</dbReference>
<dbReference type="GO" id="GO:0005829">
    <property type="term" value="C:cytosol"/>
    <property type="evidence" value="ECO:0000314"/>
    <property type="project" value="EcoCyc"/>
</dbReference>
<dbReference type="GO" id="GO:0034458">
    <property type="term" value="F:3'-5' RNA helicase activity"/>
    <property type="evidence" value="ECO:0000314"/>
    <property type="project" value="EcoCyc"/>
</dbReference>
<dbReference type="GO" id="GO:0000175">
    <property type="term" value="F:3'-5'-RNA exonuclease activity"/>
    <property type="evidence" value="ECO:0000314"/>
    <property type="project" value="EcoCyc"/>
</dbReference>
<dbReference type="GO" id="GO:0008859">
    <property type="term" value="F:exoribonuclease II activity"/>
    <property type="evidence" value="ECO:0007669"/>
    <property type="project" value="UniProtKB-UniRule"/>
</dbReference>
<dbReference type="GO" id="GO:0003723">
    <property type="term" value="F:RNA binding"/>
    <property type="evidence" value="ECO:0007669"/>
    <property type="project" value="UniProtKB-UniRule"/>
</dbReference>
<dbReference type="GO" id="GO:0016896">
    <property type="term" value="F:RNA exonuclease activity, producing 5'-phosphomonoesters"/>
    <property type="evidence" value="ECO:0000314"/>
    <property type="project" value="EcoliWiki"/>
</dbReference>
<dbReference type="GO" id="GO:0004540">
    <property type="term" value="F:RNA nuclease activity"/>
    <property type="evidence" value="ECO:0000315"/>
    <property type="project" value="EcoliWiki"/>
</dbReference>
<dbReference type="GO" id="GO:0006402">
    <property type="term" value="P:mRNA catabolic process"/>
    <property type="evidence" value="ECO:0000315"/>
    <property type="project" value="EcoCyc"/>
</dbReference>
<dbReference type="GO" id="GO:0006397">
    <property type="term" value="P:mRNA processing"/>
    <property type="evidence" value="ECO:0000315"/>
    <property type="project" value="EcoCyc"/>
</dbReference>
<dbReference type="GO" id="GO:0009409">
    <property type="term" value="P:response to cold"/>
    <property type="evidence" value="ECO:0000270"/>
    <property type="project" value="EcoCyc"/>
</dbReference>
<dbReference type="GO" id="GO:0006950">
    <property type="term" value="P:response to stress"/>
    <property type="evidence" value="ECO:0000270"/>
    <property type="project" value="EcoCyc"/>
</dbReference>
<dbReference type="CDD" id="cd04471">
    <property type="entry name" value="S1_RNase_R"/>
    <property type="match status" value="1"/>
</dbReference>
<dbReference type="FunFam" id="2.40.50.140:FF:000124">
    <property type="entry name" value="Ribonuclease R"/>
    <property type="match status" value="1"/>
</dbReference>
<dbReference type="FunFam" id="2.40.50.140:FF:000161">
    <property type="entry name" value="Ribonuclease R"/>
    <property type="match status" value="1"/>
</dbReference>
<dbReference type="Gene3D" id="2.40.50.140">
    <property type="entry name" value="Nucleic acid-binding proteins"/>
    <property type="match status" value="3"/>
</dbReference>
<dbReference type="HAMAP" id="MF_01895">
    <property type="entry name" value="RNase_R"/>
    <property type="match status" value="1"/>
</dbReference>
<dbReference type="InterPro" id="IPR011129">
    <property type="entry name" value="CSD"/>
</dbReference>
<dbReference type="InterPro" id="IPR040476">
    <property type="entry name" value="CSD2"/>
</dbReference>
<dbReference type="InterPro" id="IPR012340">
    <property type="entry name" value="NA-bd_OB-fold"/>
</dbReference>
<dbReference type="InterPro" id="IPR013223">
    <property type="entry name" value="RNase_B_OB_dom"/>
</dbReference>
<dbReference type="InterPro" id="IPR001900">
    <property type="entry name" value="RNase_II/R"/>
</dbReference>
<dbReference type="InterPro" id="IPR022966">
    <property type="entry name" value="RNase_II/R_CS"/>
</dbReference>
<dbReference type="InterPro" id="IPR004476">
    <property type="entry name" value="RNase_II/RNase_R"/>
</dbReference>
<dbReference type="InterPro" id="IPR011805">
    <property type="entry name" value="RNase_R"/>
</dbReference>
<dbReference type="InterPro" id="IPR013668">
    <property type="entry name" value="RNase_R_HTH_12"/>
</dbReference>
<dbReference type="InterPro" id="IPR050180">
    <property type="entry name" value="RNR_Ribonuclease"/>
</dbReference>
<dbReference type="InterPro" id="IPR003029">
    <property type="entry name" value="S1_domain"/>
</dbReference>
<dbReference type="NCBIfam" id="TIGR00358">
    <property type="entry name" value="3_prime_RNase"/>
    <property type="match status" value="1"/>
</dbReference>
<dbReference type="NCBIfam" id="NF008648">
    <property type="entry name" value="PRK11642.1"/>
    <property type="match status" value="1"/>
</dbReference>
<dbReference type="NCBIfam" id="TIGR02063">
    <property type="entry name" value="RNase_R"/>
    <property type="match status" value="1"/>
</dbReference>
<dbReference type="PANTHER" id="PTHR23355:SF9">
    <property type="entry name" value="DIS3-LIKE EXONUCLEASE 2"/>
    <property type="match status" value="1"/>
</dbReference>
<dbReference type="PANTHER" id="PTHR23355">
    <property type="entry name" value="RIBONUCLEASE"/>
    <property type="match status" value="1"/>
</dbReference>
<dbReference type="Pfam" id="PF17876">
    <property type="entry name" value="CSD2"/>
    <property type="match status" value="1"/>
</dbReference>
<dbReference type="Pfam" id="PF08461">
    <property type="entry name" value="HTH_12"/>
    <property type="match status" value="1"/>
</dbReference>
<dbReference type="Pfam" id="PF08206">
    <property type="entry name" value="OB_RNB"/>
    <property type="match status" value="1"/>
</dbReference>
<dbReference type="Pfam" id="PF00773">
    <property type="entry name" value="RNB"/>
    <property type="match status" value="1"/>
</dbReference>
<dbReference type="Pfam" id="PF00575">
    <property type="entry name" value="S1"/>
    <property type="match status" value="1"/>
</dbReference>
<dbReference type="SMART" id="SM00357">
    <property type="entry name" value="CSP"/>
    <property type="match status" value="1"/>
</dbReference>
<dbReference type="SMART" id="SM00955">
    <property type="entry name" value="RNB"/>
    <property type="match status" value="1"/>
</dbReference>
<dbReference type="SMART" id="SM00316">
    <property type="entry name" value="S1"/>
    <property type="match status" value="1"/>
</dbReference>
<dbReference type="SUPFAM" id="SSF50249">
    <property type="entry name" value="Nucleic acid-binding proteins"/>
    <property type="match status" value="4"/>
</dbReference>
<dbReference type="PROSITE" id="PS01175">
    <property type="entry name" value="RIBONUCLEASE_II"/>
    <property type="match status" value="1"/>
</dbReference>
<dbReference type="PROSITE" id="PS50126">
    <property type="entry name" value="S1"/>
    <property type="match status" value="1"/>
</dbReference>
<organism>
    <name type="scientific">Escherichia coli (strain K12)</name>
    <dbReference type="NCBI Taxonomy" id="83333"/>
    <lineage>
        <taxon>Bacteria</taxon>
        <taxon>Pseudomonadati</taxon>
        <taxon>Pseudomonadota</taxon>
        <taxon>Gammaproteobacteria</taxon>
        <taxon>Enterobacterales</taxon>
        <taxon>Enterobacteriaceae</taxon>
        <taxon>Escherichia</taxon>
    </lineage>
</organism>
<feature type="initiator methionine" description="Removed" evidence="3">
    <location>
        <position position="1"/>
    </location>
</feature>
<feature type="chain" id="PRO_0000166402" description="Ribonuclease R">
    <location>
        <begin position="2"/>
        <end position="813"/>
    </location>
</feature>
<feature type="domain" description="RNB" evidence="1">
    <location>
        <begin position="260"/>
        <end position="587"/>
    </location>
</feature>
<feature type="domain" description="S1 motif">
    <location>
        <begin position="644"/>
        <end position="725"/>
    </location>
</feature>
<feature type="region of interest" description="Disordered" evidence="2">
    <location>
        <begin position="731"/>
        <end position="813"/>
    </location>
</feature>
<feature type="compositionally biased region" description="Basic and acidic residues" evidence="2">
    <location>
        <begin position="737"/>
        <end position="749"/>
    </location>
</feature>
<feature type="compositionally biased region" description="Basic and acidic residues" evidence="2">
    <location>
        <begin position="761"/>
        <end position="774"/>
    </location>
</feature>
<feature type="compositionally biased region" description="Basic residues" evidence="2">
    <location>
        <begin position="775"/>
        <end position="791"/>
    </location>
</feature>
<feature type="compositionally biased region" description="Low complexity" evidence="2">
    <location>
        <begin position="792"/>
        <end position="801"/>
    </location>
</feature>
<feature type="compositionally biased region" description="Basic residues" evidence="2">
    <location>
        <begin position="802"/>
        <end position="813"/>
    </location>
</feature>
<feature type="modified residue" description="N6-acetyllysine; by PatZ" evidence="7 11">
    <location>
        <position position="544"/>
    </location>
</feature>
<feature type="mutagenesis site" description="Loss of RNase activity, but exhibits helicase activity." evidence="8">
    <original>D</original>
    <variation>N</variation>
    <location>
        <position position="272"/>
    </location>
</feature>
<feature type="mutagenesis site" description="Loss of RNase activity, but exhibits helicase activity." evidence="8">
    <original>D</original>
    <variation>N</variation>
    <location>
        <position position="280"/>
    </location>
</feature>
<feature type="mutagenesis site" description="Lack of acetylation. Maintains protein's instability in exponential phase. Becomes unstable in stationary phase." evidence="11">
    <original>K</original>
    <variation>A</variation>
    <location>
        <position position="544"/>
    </location>
</feature>
<feature type="mutagenesis site" description="Lack of acetylation. Stabilizes exponential phase RNase R." evidence="11">
    <original>K</original>
    <variation>R</variation>
    <location>
        <position position="544"/>
    </location>
</feature>
<feature type="mutagenesis site" description="Becomes unstable in stationary phase; when associated with A-766." evidence="11">
    <original>E</original>
    <variation>A</variation>
    <location>
        <position position="764"/>
    </location>
</feature>
<feature type="mutagenesis site" description="Becomes unstable in stationary phase; when associated with A-764." evidence="11">
    <original>D</original>
    <variation>A</variation>
    <location>
        <position position="766"/>
    </location>
</feature>
<evidence type="ECO:0000255" key="1"/>
<evidence type="ECO:0000256" key="2">
    <source>
        <dbReference type="SAM" id="MobiDB-lite"/>
    </source>
</evidence>
<evidence type="ECO:0000269" key="3">
    <source>
    </source>
</evidence>
<evidence type="ECO:0000269" key="4">
    <source>
    </source>
</evidence>
<evidence type="ECO:0000269" key="5">
    <source>
    </source>
</evidence>
<evidence type="ECO:0000269" key="6">
    <source>
    </source>
</evidence>
<evidence type="ECO:0000269" key="7">
    <source>
    </source>
</evidence>
<evidence type="ECO:0000269" key="8">
    <source>
    </source>
</evidence>
<evidence type="ECO:0000269" key="9">
    <source>
    </source>
</evidence>
<evidence type="ECO:0000269" key="10">
    <source>
    </source>
</evidence>
<evidence type="ECO:0000269" key="11">
    <source>
    </source>
</evidence>
<evidence type="ECO:0000269" key="12">
    <source>
    </source>
</evidence>
<evidence type="ECO:0000305" key="13"/>